<protein>
    <recommendedName>
        <fullName>Ribonucleoside-diphosphate reductase small chain 2</fullName>
        <ecNumber>1.17.4.1</ecNumber>
    </recommendedName>
    <alternativeName>
        <fullName>Ribonucleotide reductase R2 subunit 2</fullName>
    </alternativeName>
    <alternativeName>
        <fullName>Ribonucleotide reductase small subunit 2</fullName>
    </alternativeName>
</protein>
<dbReference type="EC" id="1.17.4.1"/>
<dbReference type="EMBL" id="U30385">
    <property type="protein sequence ID" value="AAB72236.1"/>
    <property type="molecule type" value="Genomic_DNA"/>
</dbReference>
<dbReference type="EMBL" id="Z72965">
    <property type="protein sequence ID" value="CAA97206.1"/>
    <property type="molecule type" value="Genomic_DNA"/>
</dbReference>
<dbReference type="EMBL" id="AY723819">
    <property type="protein sequence ID" value="AAU09736.1"/>
    <property type="molecule type" value="Genomic_DNA"/>
</dbReference>
<dbReference type="EMBL" id="BK006941">
    <property type="protein sequence ID" value="DAA08275.1"/>
    <property type="molecule type" value="Genomic_DNA"/>
</dbReference>
<dbReference type="PIR" id="S59744">
    <property type="entry name" value="S59744"/>
</dbReference>
<dbReference type="RefSeq" id="NP_011696.3">
    <property type="nucleotide sequence ID" value="NM_001181309.3"/>
</dbReference>
<dbReference type="PDB" id="1JK0">
    <property type="method" value="X-ray"/>
    <property type="resolution" value="2.80 A"/>
    <property type="chains" value="B=1-345"/>
</dbReference>
<dbReference type="PDB" id="1SMS">
    <property type="method" value="X-ray"/>
    <property type="resolution" value="3.10 A"/>
    <property type="chains" value="A/B=1-345"/>
</dbReference>
<dbReference type="PDB" id="1ZZD">
    <property type="method" value="X-ray"/>
    <property type="resolution" value="2.60 A"/>
    <property type="chains" value="B=337-345"/>
</dbReference>
<dbReference type="PDBsum" id="1JK0"/>
<dbReference type="PDBsum" id="1SMS"/>
<dbReference type="PDBsum" id="1ZZD"/>
<dbReference type="SMR" id="P49723"/>
<dbReference type="BioGRID" id="33432">
    <property type="interactions" value="231"/>
</dbReference>
<dbReference type="ComplexPortal" id="CPX-1102">
    <property type="entry name" value="Ribonucleoside-diphosphate reductase variant 1"/>
</dbReference>
<dbReference type="ComplexPortal" id="CPX-1103">
    <property type="entry name" value="Ribonucleoside-diphosphate reductase variant 2"/>
</dbReference>
<dbReference type="DIP" id="DIP-5381N"/>
<dbReference type="FunCoup" id="P49723">
    <property type="interactions" value="370"/>
</dbReference>
<dbReference type="IntAct" id="P49723">
    <property type="interactions" value="36"/>
</dbReference>
<dbReference type="MINT" id="P49723"/>
<dbReference type="STRING" id="4932.YGR180C"/>
<dbReference type="GlyGen" id="P49723">
    <property type="glycosylation" value="1 site"/>
</dbReference>
<dbReference type="iPTMnet" id="P49723"/>
<dbReference type="PaxDb" id="4932-YGR180C"/>
<dbReference type="PeptideAtlas" id="P49723"/>
<dbReference type="TopDownProteomics" id="P49723"/>
<dbReference type="EnsemblFungi" id="YGR180C_mRNA">
    <property type="protein sequence ID" value="YGR180C"/>
    <property type="gene ID" value="YGR180C"/>
</dbReference>
<dbReference type="GeneID" id="853091"/>
<dbReference type="KEGG" id="sce:YGR180C"/>
<dbReference type="AGR" id="SGD:S000003412"/>
<dbReference type="SGD" id="S000003412">
    <property type="gene designation" value="RNR4"/>
</dbReference>
<dbReference type="VEuPathDB" id="FungiDB:YGR180C"/>
<dbReference type="eggNOG" id="KOG1567">
    <property type="taxonomic scope" value="Eukaryota"/>
</dbReference>
<dbReference type="GeneTree" id="ENSGT00390000013305"/>
<dbReference type="HOGENOM" id="CLU_035339_2_1_1"/>
<dbReference type="InParanoid" id="P49723"/>
<dbReference type="OMA" id="MMENIYD"/>
<dbReference type="OrthoDB" id="10248373at2759"/>
<dbReference type="BioCyc" id="MetaCyc:YGR180C-MONOMER"/>
<dbReference type="BioCyc" id="YEAST:YGR180C-MONOMER"/>
<dbReference type="Reactome" id="R-SCE-499943">
    <property type="pathway name" value="Interconversion of nucleotide di- and triphosphates"/>
</dbReference>
<dbReference type="BioGRID-ORCS" id="853091">
    <property type="hits" value="7 hits in 10 CRISPR screens"/>
</dbReference>
<dbReference type="EvolutionaryTrace" id="P49723"/>
<dbReference type="PRO" id="PR:P49723"/>
<dbReference type="Proteomes" id="UP000002311">
    <property type="component" value="Chromosome VII"/>
</dbReference>
<dbReference type="RNAct" id="P49723">
    <property type="molecule type" value="protein"/>
</dbReference>
<dbReference type="GO" id="GO:0005737">
    <property type="term" value="C:cytoplasm"/>
    <property type="evidence" value="ECO:0000314"/>
    <property type="project" value="SGD"/>
</dbReference>
<dbReference type="GO" id="GO:0005634">
    <property type="term" value="C:nucleus"/>
    <property type="evidence" value="ECO:0000314"/>
    <property type="project" value="SGD"/>
</dbReference>
<dbReference type="GO" id="GO:0005971">
    <property type="term" value="C:ribonucleoside-diphosphate reductase complex"/>
    <property type="evidence" value="ECO:0000314"/>
    <property type="project" value="CAFA"/>
</dbReference>
<dbReference type="GO" id="GO:0046982">
    <property type="term" value="F:protein heterodimerization activity"/>
    <property type="evidence" value="ECO:0000314"/>
    <property type="project" value="CAFA"/>
</dbReference>
<dbReference type="GO" id="GO:0004748">
    <property type="term" value="F:ribonucleoside-diphosphate reductase activity, thioredoxin disulfide as acceptor"/>
    <property type="evidence" value="ECO:0000315"/>
    <property type="project" value="SGD"/>
</dbReference>
<dbReference type="GO" id="GO:0009263">
    <property type="term" value="P:deoxyribonucleotide biosynthetic process"/>
    <property type="evidence" value="ECO:0000314"/>
    <property type="project" value="SGD"/>
</dbReference>
<dbReference type="CDD" id="cd01049">
    <property type="entry name" value="RNRR2"/>
    <property type="match status" value="1"/>
</dbReference>
<dbReference type="DisProt" id="DP00488"/>
<dbReference type="FunFam" id="1.10.620.20:FF:000011">
    <property type="entry name" value="Ribonucleotide reductase"/>
    <property type="match status" value="1"/>
</dbReference>
<dbReference type="Gene3D" id="1.10.620.20">
    <property type="entry name" value="Ribonucleotide Reductase, subunit A"/>
    <property type="match status" value="1"/>
</dbReference>
<dbReference type="InterPro" id="IPR009078">
    <property type="entry name" value="Ferritin-like_SF"/>
</dbReference>
<dbReference type="InterPro" id="IPR012348">
    <property type="entry name" value="RNR-like"/>
</dbReference>
<dbReference type="InterPro" id="IPR033909">
    <property type="entry name" value="RNR_small"/>
</dbReference>
<dbReference type="InterPro" id="IPR030475">
    <property type="entry name" value="RNR_small_AS"/>
</dbReference>
<dbReference type="InterPro" id="IPR000358">
    <property type="entry name" value="RNR_small_fam"/>
</dbReference>
<dbReference type="PANTHER" id="PTHR23409">
    <property type="entry name" value="RIBONUCLEOSIDE-DIPHOSPHATE REDUCTASE SMALL CHAIN"/>
    <property type="match status" value="1"/>
</dbReference>
<dbReference type="PANTHER" id="PTHR23409:SF18">
    <property type="entry name" value="RIBONUCLEOSIDE-DIPHOSPHATE REDUCTASE SUBUNIT M2"/>
    <property type="match status" value="1"/>
</dbReference>
<dbReference type="Pfam" id="PF00268">
    <property type="entry name" value="Ribonuc_red_sm"/>
    <property type="match status" value="1"/>
</dbReference>
<dbReference type="SUPFAM" id="SSF47240">
    <property type="entry name" value="Ferritin-like"/>
    <property type="match status" value="1"/>
</dbReference>
<dbReference type="PROSITE" id="PS00368">
    <property type="entry name" value="RIBORED_SMALL"/>
    <property type="match status" value="1"/>
</dbReference>
<proteinExistence type="evidence at protein level"/>
<reference key="1">
    <citation type="journal article" date="1997" name="Mol. Cell. Biol.">
        <title>Rnr4p, a novel ribonucleotide reductase small-subunit protein.</title>
        <authorList>
            <person name="Wang P.J."/>
            <person name="Chabes A."/>
            <person name="Casagrande R."/>
            <person name="Tian X.C."/>
            <person name="Thelander L."/>
            <person name="Huffaker T.C."/>
        </authorList>
    </citation>
    <scope>NUCLEOTIDE SEQUENCE [GENOMIC DNA]</scope>
    <scope>INDUCTION</scope>
    <source>
        <strain>ATCC 204508 / S288c</strain>
    </source>
</reference>
<reference key="2">
    <citation type="journal article" date="1997" name="Nature">
        <title>The nucleotide sequence of Saccharomyces cerevisiae chromosome VII.</title>
        <authorList>
            <person name="Tettelin H."/>
            <person name="Agostoni-Carbone M.L."/>
            <person name="Albermann K."/>
            <person name="Albers M."/>
            <person name="Arroyo J."/>
            <person name="Backes U."/>
            <person name="Barreiros T."/>
            <person name="Bertani I."/>
            <person name="Bjourson A.J."/>
            <person name="Brueckner M."/>
            <person name="Bruschi C.V."/>
            <person name="Carignani G."/>
            <person name="Castagnoli L."/>
            <person name="Cerdan E."/>
            <person name="Clemente M.L."/>
            <person name="Coblenz A."/>
            <person name="Coglievina M."/>
            <person name="Coissac E."/>
            <person name="Defoor E."/>
            <person name="Del Bino S."/>
            <person name="Delius H."/>
            <person name="Delneri D."/>
            <person name="de Wergifosse P."/>
            <person name="Dujon B."/>
            <person name="Durand P."/>
            <person name="Entian K.-D."/>
            <person name="Eraso P."/>
            <person name="Escribano V."/>
            <person name="Fabiani L."/>
            <person name="Fartmann B."/>
            <person name="Feroli F."/>
            <person name="Feuermann M."/>
            <person name="Frontali L."/>
            <person name="Garcia-Gonzalez M."/>
            <person name="Garcia-Saez M.I."/>
            <person name="Goffeau A."/>
            <person name="Guerreiro P."/>
            <person name="Hani J."/>
            <person name="Hansen M."/>
            <person name="Hebling U."/>
            <person name="Hernandez K."/>
            <person name="Heumann K."/>
            <person name="Hilger F."/>
            <person name="Hofmann B."/>
            <person name="Indge K.J."/>
            <person name="James C.M."/>
            <person name="Klima R."/>
            <person name="Koetter P."/>
            <person name="Kramer B."/>
            <person name="Kramer W."/>
            <person name="Lauquin G."/>
            <person name="Leuther H."/>
            <person name="Louis E.J."/>
            <person name="Maillier E."/>
            <person name="Marconi A."/>
            <person name="Martegani E."/>
            <person name="Mazon M.J."/>
            <person name="Mazzoni C."/>
            <person name="McReynolds A.D.K."/>
            <person name="Melchioretto P."/>
            <person name="Mewes H.-W."/>
            <person name="Minenkova O."/>
            <person name="Mueller-Auer S."/>
            <person name="Nawrocki A."/>
            <person name="Netter P."/>
            <person name="Neu R."/>
            <person name="Nombela C."/>
            <person name="Oliver S.G."/>
            <person name="Panzeri L."/>
            <person name="Paoluzi S."/>
            <person name="Plevani P."/>
            <person name="Portetelle D."/>
            <person name="Portillo F."/>
            <person name="Potier S."/>
            <person name="Purnelle B."/>
            <person name="Rieger M."/>
            <person name="Riles L."/>
            <person name="Rinaldi T."/>
            <person name="Robben J."/>
            <person name="Rodrigues-Pousada C."/>
            <person name="Rodriguez-Belmonte E."/>
            <person name="Rodriguez-Torres A.M."/>
            <person name="Rose M."/>
            <person name="Ruzzi M."/>
            <person name="Saliola M."/>
            <person name="Sanchez-Perez M."/>
            <person name="Schaefer B."/>
            <person name="Schaefer M."/>
            <person name="Scharfe M."/>
            <person name="Schmidheini T."/>
            <person name="Schreer A."/>
            <person name="Skala J."/>
            <person name="Souciet J.-L."/>
            <person name="Steensma H.Y."/>
            <person name="Talla E."/>
            <person name="Thierry A."/>
            <person name="Vandenbol M."/>
            <person name="van der Aart Q.J.M."/>
            <person name="Van Dyck L."/>
            <person name="Vanoni M."/>
            <person name="Verhasselt P."/>
            <person name="Voet M."/>
            <person name="Volckaert G."/>
            <person name="Wambutt R."/>
            <person name="Watson M.D."/>
            <person name="Weber N."/>
            <person name="Wedler E."/>
            <person name="Wedler H."/>
            <person name="Wipfli P."/>
            <person name="Wolf K."/>
            <person name="Wright L.F."/>
            <person name="Zaccaria P."/>
            <person name="Zimmermann M."/>
            <person name="Zollner A."/>
            <person name="Kleine K."/>
        </authorList>
    </citation>
    <scope>NUCLEOTIDE SEQUENCE [LARGE SCALE GENOMIC DNA]</scope>
    <source>
        <strain>ATCC 204508 / S288c</strain>
    </source>
</reference>
<reference key="3">
    <citation type="journal article" date="2014" name="G3 (Bethesda)">
        <title>The reference genome sequence of Saccharomyces cerevisiae: Then and now.</title>
        <authorList>
            <person name="Engel S.R."/>
            <person name="Dietrich F.S."/>
            <person name="Fisk D.G."/>
            <person name="Binkley G."/>
            <person name="Balakrishnan R."/>
            <person name="Costanzo M.C."/>
            <person name="Dwight S.S."/>
            <person name="Hitz B.C."/>
            <person name="Karra K."/>
            <person name="Nash R.S."/>
            <person name="Weng S."/>
            <person name="Wong E.D."/>
            <person name="Lloyd P."/>
            <person name="Skrzypek M.S."/>
            <person name="Miyasato S.R."/>
            <person name="Simison M."/>
            <person name="Cherry J.M."/>
        </authorList>
    </citation>
    <scope>GENOME REANNOTATION</scope>
    <source>
        <strain>ATCC 204508 / S288c</strain>
    </source>
</reference>
<reference key="4">
    <citation type="journal article" date="2007" name="Genome Res.">
        <title>Approaching a complete repository of sequence-verified protein-encoding clones for Saccharomyces cerevisiae.</title>
        <authorList>
            <person name="Hu Y."/>
            <person name="Rolfs A."/>
            <person name="Bhullar B."/>
            <person name="Murthy T.V.S."/>
            <person name="Zhu C."/>
            <person name="Berger M.F."/>
            <person name="Camargo A.A."/>
            <person name="Kelley F."/>
            <person name="McCarron S."/>
            <person name="Jepson D."/>
            <person name="Richardson A."/>
            <person name="Raphael J."/>
            <person name="Moreira D."/>
            <person name="Taycher E."/>
            <person name="Zuo D."/>
            <person name="Mohr S."/>
            <person name="Kane M.F."/>
            <person name="Williamson J."/>
            <person name="Simpson A.J.G."/>
            <person name="Bulyk M.L."/>
            <person name="Harlow E."/>
            <person name="Marsischky G."/>
            <person name="Kolodner R.D."/>
            <person name="LaBaer J."/>
        </authorList>
    </citation>
    <scope>NUCLEOTIDE SEQUENCE [GENOMIC DNA]</scope>
    <source>
        <strain>ATCC 204508 / S288c</strain>
    </source>
</reference>
<reference key="5">
    <citation type="submission" date="2005-06" db="UniProtKB">
        <authorList>
            <person name="Bienvenut W.V."/>
            <person name="Peters C."/>
        </authorList>
    </citation>
    <scope>PROTEIN SEQUENCE OF 1-9; 150-158; 167-178; 219-235 AND 294-312</scope>
    <scope>CLEAVAGE OF INITIATOR METHIONINE</scope>
    <scope>ACETYLATION AT MET-1</scope>
    <scope>IDENTIFICATION BY MASS SPECTROMETRY</scope>
</reference>
<reference key="6">
    <citation type="journal article" date="1999" name="Proc. Natl. Acad. Sci. U.S.A.">
        <title>Purification of ribonucleotide reductase subunits Y1, Y2, Y3, and Y4 from yeast: Y4 plays a key role in diiron cluster assembly.</title>
        <authorList>
            <person name="Nguyen H.-H.T."/>
            <person name="Ge J."/>
            <person name="Perlstein D.L."/>
            <person name="Stubbe J."/>
        </authorList>
    </citation>
    <scope>FUNCTION</scope>
    <scope>SUBUNIT</scope>
</reference>
<reference key="7">
    <citation type="journal article" date="2000" name="Proc. Natl. Acad. Sci. U.S.A.">
        <title>Yeast ribonucleotide reductase has a heterodimeric iron-radical-containing subunit.</title>
        <authorList>
            <person name="Chabes A."/>
            <person name="Domkin V."/>
            <person name="Larsson G."/>
            <person name="Liu A."/>
            <person name="Graeslund A."/>
            <person name="Wijmenga S."/>
            <person name="Thelander L."/>
        </authorList>
    </citation>
    <scope>SUBUNIT</scope>
    <scope>BIOPHYSICOCHEMICAL PROPERTIES</scope>
</reference>
<reference key="8">
    <citation type="journal article" date="2003" name="Nature">
        <title>Global analysis of protein expression in yeast.</title>
        <authorList>
            <person name="Ghaemmaghami S."/>
            <person name="Huh W.-K."/>
            <person name="Bower K."/>
            <person name="Howson R.W."/>
            <person name="Belle A."/>
            <person name="Dephoure N."/>
            <person name="O'Shea E.K."/>
            <person name="Weissman J.S."/>
        </authorList>
    </citation>
    <scope>LEVEL OF PROTEIN EXPRESSION [LARGE SCALE ANALYSIS]</scope>
</reference>
<reference key="9">
    <citation type="journal article" date="2003" name="Proc. Natl. Acad. Sci. U.S.A.">
        <title>Subcellular localization of yeast ribonucleotide reductase regulated by the DNA replication and damage checkpoint pathways.</title>
        <authorList>
            <person name="Yao R."/>
            <person name="Zhang Z."/>
            <person name="An X."/>
            <person name="Bucci B."/>
            <person name="Perlstein D.L."/>
            <person name="Stubbe J."/>
            <person name="Huang M."/>
        </authorList>
    </citation>
    <scope>SUBCELLULAR LOCATION</scope>
</reference>
<reference key="10">
    <citation type="journal article" date="2007" name="J. Proteome Res.">
        <title>Large-scale phosphorylation analysis of alpha-factor-arrested Saccharomyces cerevisiae.</title>
        <authorList>
            <person name="Li X."/>
            <person name="Gerber S.A."/>
            <person name="Rudner A.D."/>
            <person name="Beausoleil S.A."/>
            <person name="Haas W."/>
            <person name="Villen J."/>
            <person name="Elias J.E."/>
            <person name="Gygi S.P."/>
        </authorList>
    </citation>
    <scope>IDENTIFICATION BY MASS SPECTROMETRY [LARGE SCALE ANALYSIS]</scope>
    <source>
        <strain>ADR376</strain>
    </source>
</reference>
<reference key="11">
    <citation type="journal article" date="2007" name="Proc. Natl. Acad. Sci. U.S.A.">
        <title>Analysis of phosphorylation sites on proteins from Saccharomyces cerevisiae by electron transfer dissociation (ETD) mass spectrometry.</title>
        <authorList>
            <person name="Chi A."/>
            <person name="Huttenhower C."/>
            <person name="Geer L.Y."/>
            <person name="Coon J.J."/>
            <person name="Syka J.E.P."/>
            <person name="Bai D.L."/>
            <person name="Shabanowitz J."/>
            <person name="Burke D.J."/>
            <person name="Troyanskaya O.G."/>
            <person name="Hunt D.F."/>
        </authorList>
    </citation>
    <scope>PHOSPHORYLATION [LARGE SCALE ANALYSIS] AT SER-169</scope>
    <scope>IDENTIFICATION BY MASS SPECTROMETRY [LARGE SCALE ANALYSIS]</scope>
</reference>
<reference key="12">
    <citation type="journal article" date="2008" name="Mol. Cell">
        <title>Dif1 is a DNA-damage-regulated facilitator of nuclear import for ribonucleotide reductase.</title>
        <authorList>
            <person name="Lee Y.D."/>
            <person name="Wang J."/>
            <person name="Stubbe J."/>
            <person name="Elledge S.J."/>
        </authorList>
    </citation>
    <scope>SUBCELLULAR LOCATION</scope>
    <scope>INTERACTION WITH DIF1 AND RNR4</scope>
</reference>
<reference key="13">
    <citation type="journal article" date="2008" name="Mol. Cell. Proteomics">
        <title>A multidimensional chromatography technology for in-depth phosphoproteome analysis.</title>
        <authorList>
            <person name="Albuquerque C.P."/>
            <person name="Smolka M.B."/>
            <person name="Payne S.H."/>
            <person name="Bafna V."/>
            <person name="Eng J."/>
            <person name="Zhou H."/>
        </authorList>
    </citation>
    <scope>PHOSPHORYLATION [LARGE SCALE ANALYSIS] AT SER-169</scope>
    <scope>IDENTIFICATION BY MASS SPECTROMETRY [LARGE SCALE ANALYSIS]</scope>
</reference>
<reference key="14">
    <citation type="journal article" date="2009" name="Science">
        <title>Global analysis of Cdk1 substrate phosphorylation sites provides insights into evolution.</title>
        <authorList>
            <person name="Holt L.J."/>
            <person name="Tuch B.B."/>
            <person name="Villen J."/>
            <person name="Johnson A.D."/>
            <person name="Gygi S.P."/>
            <person name="Morgan D.O."/>
        </authorList>
    </citation>
    <scope>PHOSPHORYLATION [LARGE SCALE ANALYSIS] AT SER-332; THR-334 AND SER-336</scope>
    <scope>IDENTIFICATION BY MASS SPECTROMETRY [LARGE SCALE ANALYSIS]</scope>
</reference>
<reference key="15">
    <citation type="journal article" date="2012" name="Proc. Natl. Acad. Sci. U.S.A.">
        <title>N-terminal acetylome analyses and functional insights of the N-terminal acetyltransferase NatB.</title>
        <authorList>
            <person name="Van Damme P."/>
            <person name="Lasa M."/>
            <person name="Polevoda B."/>
            <person name="Gazquez C."/>
            <person name="Elosegui-Artola A."/>
            <person name="Kim D.S."/>
            <person name="De Juan-Pardo E."/>
            <person name="Demeyer K."/>
            <person name="Hole K."/>
            <person name="Larrea E."/>
            <person name="Timmerman E."/>
            <person name="Prieto J."/>
            <person name="Arnesen T."/>
            <person name="Sherman F."/>
            <person name="Gevaert K."/>
            <person name="Aldabe R."/>
        </authorList>
    </citation>
    <scope>ACETYLATION [LARGE SCALE ANALYSIS] AT MET-1</scope>
    <scope>IDENTIFICATION BY MASS SPECTROMETRY [LARGE SCALE ANALYSIS]</scope>
</reference>
<reference key="16">
    <citation type="journal article" date="2012" name="Proteomics">
        <title>Sites of ubiquitin attachment in Saccharomyces cerevisiae.</title>
        <authorList>
            <person name="Starita L.M."/>
            <person name="Lo R.S."/>
            <person name="Eng J.K."/>
            <person name="von Haller P.D."/>
            <person name="Fields S."/>
        </authorList>
    </citation>
    <scope>UBIQUITINATION [LARGE SCALE ANALYSIS] AT LYS-337</scope>
    <scope>IDENTIFICATION BY MASS SPECTROMETRY [LARGE SCALE ANALYSIS]</scope>
</reference>
<reference key="17">
    <citation type="journal article" date="2001" name="Proc. Natl. Acad. Sci. U.S.A.">
        <title>Structure of the yeast ribonucleotide reductase Y2Y4 heterodimer.</title>
        <authorList>
            <person name="Voegtli W.C."/>
            <person name="Ge J."/>
            <person name="Perlstein D.L."/>
            <person name="Stubbe J."/>
            <person name="Rosenzweig A.C."/>
        </authorList>
    </citation>
    <scope>X-RAY CRYSTALLOGRAPHY (2.8 ANGSTROMS)</scope>
</reference>
<reference key="18">
    <citation type="journal article" date="2004" name="Biochemistry">
        <title>Structures of the yeast ribonucleotide reductase Rnr2 and Rnr4 homodimers.</title>
        <authorList>
            <person name="Sommerhalter M."/>
            <person name="Voegtli W.C."/>
            <person name="Perlstein D.L."/>
            <person name="Ge J."/>
            <person name="Stubbe J."/>
            <person name="Rosenzweig A.C."/>
        </authorList>
    </citation>
    <scope>X-RAY CRYSTALLOGRAPHY (3.1 ANGSTROMS)</scope>
</reference>
<name>RIR4_YEAST</name>
<gene>
    <name type="primary">RNR4</name>
    <name type="synonym">CRT3</name>
    <name type="ordered locus">YGR180C</name>
</gene>
<comment type="function">
    <text evidence="2">Provides the precursors necessary for DNA synthesis. Catalyzes the biosynthesis of deoxyribonucleotides from the corresponding ribonucleotides. RNR4 is required for proper folding of RNR2 and assembly with the large subunits.</text>
</comment>
<comment type="catalytic activity">
    <reaction evidence="1">
        <text>a 2'-deoxyribonucleoside 5'-diphosphate + [thioredoxin]-disulfide + H2O = a ribonucleoside 5'-diphosphate + [thioredoxin]-dithiol</text>
        <dbReference type="Rhea" id="RHEA:23252"/>
        <dbReference type="Rhea" id="RHEA-COMP:10698"/>
        <dbReference type="Rhea" id="RHEA-COMP:10700"/>
        <dbReference type="ChEBI" id="CHEBI:15377"/>
        <dbReference type="ChEBI" id="CHEBI:29950"/>
        <dbReference type="ChEBI" id="CHEBI:50058"/>
        <dbReference type="ChEBI" id="CHEBI:57930"/>
        <dbReference type="ChEBI" id="CHEBI:73316"/>
        <dbReference type="EC" id="1.17.4.1"/>
    </reaction>
</comment>
<comment type="biophysicochemical properties">
    <kinetics>
        <Vmax evidence="3">2250.0 nmol/min/mg enzyme for cytidine 5'-diphosphate</Vmax>
    </kinetics>
    <temperatureDependence>
        <text evidence="3">Optimum temperature is 30 degrees Celsius.</text>
    </temperatureDependence>
</comment>
<comment type="subunit">
    <text evidence="2 3 6">Heterotetramer of two large (R1) and two small (R2) subunits. S.cerevisiae has two different R1 subunits (RNR1 and RNR3) and two different R2 subunits (RNR2 and RNR4). The functional form of the small subunits is a RNR2-RNR4 heterodimer, where RNR2 provides the iron-radical center and RNR4 is required for proper folding of RNR2 and assembly with the large subunits. Under normal growth conditions, the active form of the large subunits is a homodimer of the constitutively expressed RNR1. In damaged cells or cells arrested for DNA synthesis, the reductase consists of multiple species because of the association of the small subunits (RNR2-RNR4) with either the RNR1 homodimer or a heterodimer of RNR1 and the damage-inducible RNR3. Interacts with DIF1.</text>
</comment>
<comment type="interaction">
    <interactant intactId="EBI-15251">
        <id>P49723</id>
    </interactant>
    <interactant intactId="EBI-15234">
        <id>P21524</id>
        <label>RNR1</label>
    </interactant>
    <organismsDiffer>false</organismsDiffer>
    <experiments>6</experiments>
</comment>
<comment type="interaction">
    <interactant intactId="EBI-15251">
        <id>P49723</id>
    </interactant>
    <interactant intactId="EBI-15240">
        <id>P09938</id>
        <label>RNR2</label>
    </interactant>
    <organismsDiffer>false</organismsDiffer>
    <experiments>9</experiments>
</comment>
<comment type="interaction">
    <interactant intactId="EBI-15251">
        <id>P49723</id>
    </interactant>
    <interactant intactId="EBI-20563">
        <id>Q12363</id>
        <label>WTM1</label>
    </interactant>
    <organismsDiffer>false</organismsDiffer>
    <experiments>6</experiments>
</comment>
<comment type="interaction">
    <interactant intactId="EBI-15251">
        <id>P49723</id>
    </interactant>
    <interactant intactId="EBI-20571">
        <id>Q12206</id>
        <label>WTM2</label>
    </interactant>
    <organismsDiffer>false</organismsDiffer>
    <experiments>3</experiments>
</comment>
<comment type="subcellular location">
    <subcellularLocation>
        <location evidence="4 6">Nucleus</location>
    </subcellularLocation>
    <text>Found predominantly in the nucleus under normal growth conditions and is redistributed to the cytoplasm in damaged cells in a DNA replication and damage checkpoint-dependent manner. Nuclear localization is mediated by DIF1.</text>
</comment>
<comment type="induction">
    <text evidence="7">Induced by DNA-damage.</text>
</comment>
<comment type="miscellaneous">
    <text evidence="5">Present with 88884 molecules/cell in log phase SD medium.</text>
</comment>
<comment type="miscellaneous">
    <text>Lacks 3 iron-binding residues conserved in all other R2 subunits.</text>
</comment>
<comment type="similarity">
    <text evidence="9">Belongs to the ribonucleoside diphosphate reductase small chain family.</text>
</comment>
<feature type="chain" id="PRO_0000190465" description="Ribonucleoside-diphosphate reductase small chain 2">
    <location>
        <begin position="1"/>
        <end position="345"/>
    </location>
</feature>
<feature type="active site" evidence="1">
    <location>
        <position position="131"/>
    </location>
</feature>
<feature type="modified residue" description="N-acetylmethionine" evidence="8 14">
    <location>
        <position position="1"/>
    </location>
</feature>
<feature type="modified residue" description="Phosphoserine" evidence="10 11">
    <location>
        <position position="169"/>
    </location>
</feature>
<feature type="modified residue" description="Phosphoserine" evidence="12">
    <location>
        <position position="332"/>
    </location>
</feature>
<feature type="modified residue" description="Phosphothreonine" evidence="12">
    <location>
        <position position="334"/>
    </location>
</feature>
<feature type="modified residue" description="Phosphoserine" evidence="12">
    <location>
        <position position="336"/>
    </location>
</feature>
<feature type="cross-link" description="Glycyl lysine isopeptide (Lys-Gly) (interchain with G-Cter in ubiquitin)" evidence="13">
    <location>
        <position position="337"/>
    </location>
</feature>
<feature type="sequence conflict" description="In Ref. 4; AAU09736." evidence="9" ref="4">
    <original>Y</original>
    <variation>H</variation>
    <location>
        <position position="127"/>
    </location>
</feature>
<feature type="helix" evidence="16">
    <location>
        <begin position="4"/>
        <end position="9"/>
    </location>
</feature>
<feature type="helix" evidence="15">
    <location>
        <begin position="13"/>
        <end position="21"/>
    </location>
</feature>
<feature type="turn" evidence="15">
    <location>
        <begin position="22"/>
        <end position="24"/>
    </location>
</feature>
<feature type="turn" evidence="15">
    <location>
        <begin position="26"/>
        <end position="28"/>
    </location>
</feature>
<feature type="helix" evidence="15">
    <location>
        <begin position="43"/>
        <end position="54"/>
    </location>
</feature>
<feature type="helix" evidence="15">
    <location>
        <begin position="59"/>
        <end position="61"/>
    </location>
</feature>
<feature type="turn" evidence="15">
    <location>
        <begin position="65"/>
        <end position="67"/>
    </location>
</feature>
<feature type="turn" evidence="15">
    <location>
        <begin position="69"/>
        <end position="73"/>
    </location>
</feature>
<feature type="helix" evidence="15">
    <location>
        <begin position="78"/>
        <end position="89"/>
    </location>
</feature>
<feature type="helix" evidence="15">
    <location>
        <begin position="101"/>
        <end position="107"/>
    </location>
</feature>
<feature type="helix" evidence="15">
    <location>
        <begin position="111"/>
        <end position="138"/>
    </location>
</feature>
<feature type="helix" evidence="16">
    <location>
        <begin position="142"/>
        <end position="144"/>
    </location>
</feature>
<feature type="helix" evidence="15">
    <location>
        <begin position="148"/>
        <end position="151"/>
    </location>
</feature>
<feature type="helix" evidence="15">
    <location>
        <begin position="155"/>
        <end position="166"/>
    </location>
</feature>
<feature type="strand" evidence="15">
    <location>
        <begin position="169"/>
        <end position="172"/>
    </location>
</feature>
<feature type="helix" evidence="15">
    <location>
        <begin position="175"/>
        <end position="187"/>
    </location>
</feature>
<feature type="turn" evidence="15">
    <location>
        <begin position="188"/>
        <end position="190"/>
    </location>
</feature>
<feature type="helix" evidence="15">
    <location>
        <begin position="191"/>
        <end position="200"/>
    </location>
</feature>
<feature type="strand" evidence="15">
    <location>
        <begin position="202"/>
        <end position="205"/>
    </location>
</feature>
<feature type="helix" evidence="15">
    <location>
        <begin position="207"/>
        <end position="232"/>
    </location>
</feature>
<feature type="helix" evidence="15">
    <location>
        <begin position="240"/>
        <end position="258"/>
    </location>
</feature>
<feature type="turn" evidence="16">
    <location>
        <begin position="265"/>
        <end position="268"/>
    </location>
</feature>
<feature type="helix" evidence="15">
    <location>
        <begin position="277"/>
        <end position="288"/>
    </location>
</feature>
<feature type="helix" evidence="16">
    <location>
        <begin position="316"/>
        <end position="322"/>
    </location>
</feature>
<evidence type="ECO:0000255" key="1">
    <source>
        <dbReference type="PROSITE-ProRule" id="PRU10014"/>
    </source>
</evidence>
<evidence type="ECO:0000269" key="2">
    <source>
    </source>
</evidence>
<evidence type="ECO:0000269" key="3">
    <source>
    </source>
</evidence>
<evidence type="ECO:0000269" key="4">
    <source>
    </source>
</evidence>
<evidence type="ECO:0000269" key="5">
    <source>
    </source>
</evidence>
<evidence type="ECO:0000269" key="6">
    <source>
    </source>
</evidence>
<evidence type="ECO:0000269" key="7">
    <source>
    </source>
</evidence>
<evidence type="ECO:0000269" key="8">
    <source ref="5"/>
</evidence>
<evidence type="ECO:0000305" key="9"/>
<evidence type="ECO:0007744" key="10">
    <source>
    </source>
</evidence>
<evidence type="ECO:0007744" key="11">
    <source>
    </source>
</evidence>
<evidence type="ECO:0007744" key="12">
    <source>
    </source>
</evidence>
<evidence type="ECO:0007744" key="13">
    <source>
    </source>
</evidence>
<evidence type="ECO:0007744" key="14">
    <source>
    </source>
</evidence>
<evidence type="ECO:0007829" key="15">
    <source>
        <dbReference type="PDB" id="1JK0"/>
    </source>
</evidence>
<evidence type="ECO:0007829" key="16">
    <source>
        <dbReference type="PDB" id="1SMS"/>
    </source>
</evidence>
<organism>
    <name type="scientific">Saccharomyces cerevisiae (strain ATCC 204508 / S288c)</name>
    <name type="common">Baker's yeast</name>
    <dbReference type="NCBI Taxonomy" id="559292"/>
    <lineage>
        <taxon>Eukaryota</taxon>
        <taxon>Fungi</taxon>
        <taxon>Dikarya</taxon>
        <taxon>Ascomycota</taxon>
        <taxon>Saccharomycotina</taxon>
        <taxon>Saccharomycetes</taxon>
        <taxon>Saccharomycetales</taxon>
        <taxon>Saccharomycetaceae</taxon>
        <taxon>Saccharomyces</taxon>
    </lineage>
</organism>
<sequence length="345" mass="40055">MEAHNQFLKTFQKERHDMKEAEKDEILLMENSRRFVMFPIKYHEIWAAYKKVEASFWTAEEIELAKDTEDFQKLTDDQKTYIGNLLALSISSDNLVNKYLIENFSAQLQNPEGKSFYGFQIMMENIYSEVYSMMVDAFFKDPKNIPLFKEIANLPEVKHKAAFIERWISNDDSLYAERLVAFAAKEGIFQAGNYASMFWLTDKKIMPGLAMANRNICRDRGAYTDFSCLLFAHLRTKPNPKIIEKIITEAVEIEKEYYSNSLPVEKFGMDLKSIHTYIEFVADGLLQGFGNEKYYNAVNPFEFMEDVATAGKTTFFEKKVSDYQKASDMSKSATPSKEINFDDDF</sequence>
<accession>P49723</accession>
<accession>D6VUW4</accession>
<accession>Q66R92</accession>
<keyword id="KW-0002">3D-structure</keyword>
<keyword id="KW-0007">Acetylation</keyword>
<keyword id="KW-0215">Deoxyribonucleotide synthesis</keyword>
<keyword id="KW-0903">Direct protein sequencing</keyword>
<keyword id="KW-1017">Isopeptide bond</keyword>
<keyword id="KW-0539">Nucleus</keyword>
<keyword id="KW-0560">Oxidoreductase</keyword>
<keyword id="KW-0597">Phosphoprotein</keyword>
<keyword id="KW-1185">Reference proteome</keyword>
<keyword id="KW-0832">Ubl conjugation</keyword>